<reference key="1">
    <citation type="journal article" date="2007" name="PLoS Genet.">
        <title>The complete genome sequence of Yersinia pseudotuberculosis IP31758, the causative agent of Far East scarlet-like fever.</title>
        <authorList>
            <person name="Eppinger M."/>
            <person name="Rosovitz M.J."/>
            <person name="Fricke W.F."/>
            <person name="Rasko D.A."/>
            <person name="Kokorina G."/>
            <person name="Fayolle C."/>
            <person name="Lindler L.E."/>
            <person name="Carniel E."/>
            <person name="Ravel J."/>
        </authorList>
    </citation>
    <scope>NUCLEOTIDE SEQUENCE [LARGE SCALE GENOMIC DNA]</scope>
    <source>
        <strain>IP 31758</strain>
    </source>
</reference>
<proteinExistence type="inferred from homology"/>
<gene>
    <name type="ordered locus">YpsIP31758_3941</name>
</gene>
<protein>
    <recommendedName>
        <fullName evidence="1">UPF0270 protein YpsIP31758_3941</fullName>
    </recommendedName>
</protein>
<accession>A7FNR1</accession>
<sequence>MIIPWQQVDSETLDNLLEAFVLREGTDYGEHERSLTEKVADVRRQLVSGEAVLVWSELHETINIMPRGSFHAGAEEQQ</sequence>
<feature type="chain" id="PRO_1000062018" description="UPF0270 protein YpsIP31758_3941">
    <location>
        <begin position="1"/>
        <end position="78"/>
    </location>
</feature>
<dbReference type="EMBL" id="CP000720">
    <property type="protein sequence ID" value="ABS49374.1"/>
    <property type="molecule type" value="Genomic_DNA"/>
</dbReference>
<dbReference type="RefSeq" id="WP_011193222.1">
    <property type="nucleotide sequence ID" value="NC_009708.1"/>
</dbReference>
<dbReference type="SMR" id="A7FNR1"/>
<dbReference type="KEGG" id="ypi:YpsIP31758_3941"/>
<dbReference type="HOGENOM" id="CLU_186759_1_0_6"/>
<dbReference type="Proteomes" id="UP000002412">
    <property type="component" value="Chromosome"/>
</dbReference>
<dbReference type="Gene3D" id="1.10.10.610">
    <property type="entry name" value="YehU-like"/>
    <property type="match status" value="1"/>
</dbReference>
<dbReference type="HAMAP" id="MF_00690">
    <property type="entry name" value="UPF0270"/>
    <property type="match status" value="1"/>
</dbReference>
<dbReference type="InterPro" id="IPR010648">
    <property type="entry name" value="UPF0270"/>
</dbReference>
<dbReference type="InterPro" id="IPR036685">
    <property type="entry name" value="YehU-like_sf"/>
</dbReference>
<dbReference type="NCBIfam" id="NF003438">
    <property type="entry name" value="PRK04966.1"/>
    <property type="match status" value="1"/>
</dbReference>
<dbReference type="Pfam" id="PF06794">
    <property type="entry name" value="UPF0270"/>
    <property type="match status" value="1"/>
</dbReference>
<dbReference type="PIRSF" id="PIRSF006169">
    <property type="entry name" value="UCP006169"/>
    <property type="match status" value="1"/>
</dbReference>
<dbReference type="SUPFAM" id="SSF118001">
    <property type="entry name" value="YehU-like"/>
    <property type="match status" value="1"/>
</dbReference>
<organism>
    <name type="scientific">Yersinia pseudotuberculosis serotype O:1b (strain IP 31758)</name>
    <dbReference type="NCBI Taxonomy" id="349747"/>
    <lineage>
        <taxon>Bacteria</taxon>
        <taxon>Pseudomonadati</taxon>
        <taxon>Pseudomonadota</taxon>
        <taxon>Gammaproteobacteria</taxon>
        <taxon>Enterobacterales</taxon>
        <taxon>Yersiniaceae</taxon>
        <taxon>Yersinia</taxon>
    </lineage>
</organism>
<comment type="similarity">
    <text evidence="1">Belongs to the UPF0270 family.</text>
</comment>
<evidence type="ECO:0000255" key="1">
    <source>
        <dbReference type="HAMAP-Rule" id="MF_00690"/>
    </source>
</evidence>
<name>Y3941_YERP3</name>